<accession>Q030G2</accession>
<sequence>MTDSQITAQILTESLKYFLKYRDQTVVIKYGGNVMIDEKVKESILKDILLLKTVGIKVVLVHGGGPAIGELLEKYEQKSQFVKGLRVTNKKTAQLALTALAGKVNKSLVQDIIRLGGNAIGVSGIDGKLIEAKPISEDLGYVGEITAIHPEIIERINQTDAVPVIASAAIGLDGEIYNVNADTAASRIAGSLCAEQFILLSDVRGLYGNFPDEGSFIDEINLTNLEKLVKEKKITDGMIPKIEAIKYAMQEGLGQAVLLDGRVPHALLLELFTDRGQGTLINH</sequence>
<protein>
    <recommendedName>
        <fullName evidence="1">Acetylglutamate kinase</fullName>
        <ecNumber evidence="1">2.7.2.8</ecNumber>
    </recommendedName>
    <alternativeName>
        <fullName evidence="1">N-acetyl-L-glutamate 5-phosphotransferase</fullName>
    </alternativeName>
    <alternativeName>
        <fullName evidence="1">NAG kinase</fullName>
        <shortName evidence="1">NAGK</shortName>
    </alternativeName>
</protein>
<name>ARGB_LACLS</name>
<proteinExistence type="inferred from homology"/>
<evidence type="ECO:0000255" key="1">
    <source>
        <dbReference type="HAMAP-Rule" id="MF_00082"/>
    </source>
</evidence>
<gene>
    <name evidence="1" type="primary">argB</name>
    <name type="ordered locus">LACR_0859</name>
</gene>
<organism>
    <name type="scientific">Lactococcus lactis subsp. cremoris (strain SK11)</name>
    <dbReference type="NCBI Taxonomy" id="272622"/>
    <lineage>
        <taxon>Bacteria</taxon>
        <taxon>Bacillati</taxon>
        <taxon>Bacillota</taxon>
        <taxon>Bacilli</taxon>
        <taxon>Lactobacillales</taxon>
        <taxon>Streptococcaceae</taxon>
        <taxon>Lactococcus</taxon>
        <taxon>Lactococcus cremoris subsp. cremoris</taxon>
    </lineage>
</organism>
<dbReference type="EC" id="2.7.2.8" evidence="1"/>
<dbReference type="EMBL" id="CP000425">
    <property type="protein sequence ID" value="ABJ72410.1"/>
    <property type="molecule type" value="Genomic_DNA"/>
</dbReference>
<dbReference type="RefSeq" id="WP_011675935.1">
    <property type="nucleotide sequence ID" value="NC_008527.1"/>
</dbReference>
<dbReference type="SMR" id="Q030G2"/>
<dbReference type="KEGG" id="llc:LACR_0859"/>
<dbReference type="HOGENOM" id="CLU_053680_0_0_9"/>
<dbReference type="UniPathway" id="UPA00068">
    <property type="reaction ID" value="UER00107"/>
</dbReference>
<dbReference type="Proteomes" id="UP000000240">
    <property type="component" value="Chromosome"/>
</dbReference>
<dbReference type="GO" id="GO:0005737">
    <property type="term" value="C:cytoplasm"/>
    <property type="evidence" value="ECO:0007669"/>
    <property type="project" value="UniProtKB-SubCell"/>
</dbReference>
<dbReference type="GO" id="GO:0003991">
    <property type="term" value="F:acetylglutamate kinase activity"/>
    <property type="evidence" value="ECO:0007669"/>
    <property type="project" value="UniProtKB-UniRule"/>
</dbReference>
<dbReference type="GO" id="GO:0005524">
    <property type="term" value="F:ATP binding"/>
    <property type="evidence" value="ECO:0007669"/>
    <property type="project" value="UniProtKB-UniRule"/>
</dbReference>
<dbReference type="GO" id="GO:0042450">
    <property type="term" value="P:arginine biosynthetic process via ornithine"/>
    <property type="evidence" value="ECO:0007669"/>
    <property type="project" value="UniProtKB-UniRule"/>
</dbReference>
<dbReference type="GO" id="GO:0006526">
    <property type="term" value="P:L-arginine biosynthetic process"/>
    <property type="evidence" value="ECO:0007669"/>
    <property type="project" value="UniProtKB-UniPathway"/>
</dbReference>
<dbReference type="CDD" id="cd04250">
    <property type="entry name" value="AAK_NAGK-C"/>
    <property type="match status" value="1"/>
</dbReference>
<dbReference type="FunFam" id="3.40.1160.10:FF:000004">
    <property type="entry name" value="Acetylglutamate kinase"/>
    <property type="match status" value="1"/>
</dbReference>
<dbReference type="Gene3D" id="3.40.1160.10">
    <property type="entry name" value="Acetylglutamate kinase-like"/>
    <property type="match status" value="1"/>
</dbReference>
<dbReference type="HAMAP" id="MF_00082">
    <property type="entry name" value="ArgB"/>
    <property type="match status" value="1"/>
</dbReference>
<dbReference type="InterPro" id="IPR036393">
    <property type="entry name" value="AceGlu_kinase-like_sf"/>
</dbReference>
<dbReference type="InterPro" id="IPR004662">
    <property type="entry name" value="AcgluKinase_fam"/>
</dbReference>
<dbReference type="InterPro" id="IPR037528">
    <property type="entry name" value="ArgB"/>
</dbReference>
<dbReference type="InterPro" id="IPR001048">
    <property type="entry name" value="Asp/Glu/Uridylate_kinase"/>
</dbReference>
<dbReference type="InterPro" id="IPR001057">
    <property type="entry name" value="Glu/AcGlu_kinase"/>
</dbReference>
<dbReference type="InterPro" id="IPR041727">
    <property type="entry name" value="NAGK-C"/>
</dbReference>
<dbReference type="NCBIfam" id="TIGR00761">
    <property type="entry name" value="argB"/>
    <property type="match status" value="1"/>
</dbReference>
<dbReference type="PANTHER" id="PTHR23342">
    <property type="entry name" value="N-ACETYLGLUTAMATE SYNTHASE"/>
    <property type="match status" value="1"/>
</dbReference>
<dbReference type="PANTHER" id="PTHR23342:SF0">
    <property type="entry name" value="N-ACETYLGLUTAMATE SYNTHASE, MITOCHONDRIAL"/>
    <property type="match status" value="1"/>
</dbReference>
<dbReference type="Pfam" id="PF00696">
    <property type="entry name" value="AA_kinase"/>
    <property type="match status" value="1"/>
</dbReference>
<dbReference type="PIRSF" id="PIRSF000728">
    <property type="entry name" value="NAGK"/>
    <property type="match status" value="1"/>
</dbReference>
<dbReference type="PRINTS" id="PR00474">
    <property type="entry name" value="GLU5KINASE"/>
</dbReference>
<dbReference type="SUPFAM" id="SSF53633">
    <property type="entry name" value="Carbamate kinase-like"/>
    <property type="match status" value="1"/>
</dbReference>
<keyword id="KW-0028">Amino-acid biosynthesis</keyword>
<keyword id="KW-0055">Arginine biosynthesis</keyword>
<keyword id="KW-0067">ATP-binding</keyword>
<keyword id="KW-0963">Cytoplasm</keyword>
<keyword id="KW-0418">Kinase</keyword>
<keyword id="KW-0547">Nucleotide-binding</keyword>
<keyword id="KW-0808">Transferase</keyword>
<reference key="1">
    <citation type="journal article" date="2006" name="Proc. Natl. Acad. Sci. U.S.A.">
        <title>Comparative genomics of the lactic acid bacteria.</title>
        <authorList>
            <person name="Makarova K.S."/>
            <person name="Slesarev A."/>
            <person name="Wolf Y.I."/>
            <person name="Sorokin A."/>
            <person name="Mirkin B."/>
            <person name="Koonin E.V."/>
            <person name="Pavlov A."/>
            <person name="Pavlova N."/>
            <person name="Karamychev V."/>
            <person name="Polouchine N."/>
            <person name="Shakhova V."/>
            <person name="Grigoriev I."/>
            <person name="Lou Y."/>
            <person name="Rohksar D."/>
            <person name="Lucas S."/>
            <person name="Huang K."/>
            <person name="Goodstein D.M."/>
            <person name="Hawkins T."/>
            <person name="Plengvidhya V."/>
            <person name="Welker D."/>
            <person name="Hughes J."/>
            <person name="Goh Y."/>
            <person name="Benson A."/>
            <person name="Baldwin K."/>
            <person name="Lee J.-H."/>
            <person name="Diaz-Muniz I."/>
            <person name="Dosti B."/>
            <person name="Smeianov V."/>
            <person name="Wechter W."/>
            <person name="Barabote R."/>
            <person name="Lorca G."/>
            <person name="Altermann E."/>
            <person name="Barrangou R."/>
            <person name="Ganesan B."/>
            <person name="Xie Y."/>
            <person name="Rawsthorne H."/>
            <person name="Tamir D."/>
            <person name="Parker C."/>
            <person name="Breidt F."/>
            <person name="Broadbent J.R."/>
            <person name="Hutkins R."/>
            <person name="O'Sullivan D."/>
            <person name="Steele J."/>
            <person name="Unlu G."/>
            <person name="Saier M.H. Jr."/>
            <person name="Klaenhammer T."/>
            <person name="Richardson P."/>
            <person name="Kozyavkin S."/>
            <person name="Weimer B.C."/>
            <person name="Mills D.A."/>
        </authorList>
    </citation>
    <scope>NUCLEOTIDE SEQUENCE [LARGE SCALE GENOMIC DNA]</scope>
    <source>
        <strain>SK11</strain>
    </source>
</reference>
<feature type="chain" id="PRO_1000010504" description="Acetylglutamate kinase">
    <location>
        <begin position="1"/>
        <end position="283"/>
    </location>
</feature>
<feature type="binding site" evidence="1">
    <location>
        <begin position="64"/>
        <end position="65"/>
    </location>
    <ligand>
        <name>substrate</name>
    </ligand>
</feature>
<feature type="binding site" evidence="1">
    <location>
        <position position="86"/>
    </location>
    <ligand>
        <name>substrate</name>
    </ligand>
</feature>
<feature type="binding site" evidence="1">
    <location>
        <position position="178"/>
    </location>
    <ligand>
        <name>substrate</name>
    </ligand>
</feature>
<feature type="site" description="Transition state stabilizer" evidence="1">
    <location>
        <position position="29"/>
    </location>
</feature>
<feature type="site" description="Transition state stabilizer" evidence="1">
    <location>
        <position position="241"/>
    </location>
</feature>
<comment type="function">
    <text evidence="1">Catalyzes the ATP-dependent phosphorylation of N-acetyl-L-glutamate.</text>
</comment>
<comment type="catalytic activity">
    <reaction evidence="1">
        <text>N-acetyl-L-glutamate + ATP = N-acetyl-L-glutamyl 5-phosphate + ADP</text>
        <dbReference type="Rhea" id="RHEA:14629"/>
        <dbReference type="ChEBI" id="CHEBI:30616"/>
        <dbReference type="ChEBI" id="CHEBI:44337"/>
        <dbReference type="ChEBI" id="CHEBI:57936"/>
        <dbReference type="ChEBI" id="CHEBI:456216"/>
        <dbReference type="EC" id="2.7.2.8"/>
    </reaction>
</comment>
<comment type="pathway">
    <text evidence="1">Amino-acid biosynthesis; L-arginine biosynthesis; N(2)-acetyl-L-ornithine from L-glutamate: step 2/4.</text>
</comment>
<comment type="subcellular location">
    <subcellularLocation>
        <location evidence="1">Cytoplasm</location>
    </subcellularLocation>
</comment>
<comment type="similarity">
    <text evidence="1">Belongs to the acetylglutamate kinase family. ArgB subfamily.</text>
</comment>